<name>MSH3_DEBHA</name>
<evidence type="ECO:0000250" key="1"/>
<evidence type="ECO:0000255" key="2"/>
<evidence type="ECO:0000256" key="3">
    <source>
        <dbReference type="SAM" id="MobiDB-lite"/>
    </source>
</evidence>
<evidence type="ECO:0000305" key="4"/>
<accession>Q6BW83</accession>
<accession>B5RT01</accession>
<reference key="1">
    <citation type="journal article" date="2004" name="Nature">
        <title>Genome evolution in yeasts.</title>
        <authorList>
            <person name="Dujon B."/>
            <person name="Sherman D."/>
            <person name="Fischer G."/>
            <person name="Durrens P."/>
            <person name="Casaregola S."/>
            <person name="Lafontaine I."/>
            <person name="de Montigny J."/>
            <person name="Marck C."/>
            <person name="Neuveglise C."/>
            <person name="Talla E."/>
            <person name="Goffard N."/>
            <person name="Frangeul L."/>
            <person name="Aigle M."/>
            <person name="Anthouard V."/>
            <person name="Babour A."/>
            <person name="Barbe V."/>
            <person name="Barnay S."/>
            <person name="Blanchin S."/>
            <person name="Beckerich J.-M."/>
            <person name="Beyne E."/>
            <person name="Bleykasten C."/>
            <person name="Boisrame A."/>
            <person name="Boyer J."/>
            <person name="Cattolico L."/>
            <person name="Confanioleri F."/>
            <person name="de Daruvar A."/>
            <person name="Despons L."/>
            <person name="Fabre E."/>
            <person name="Fairhead C."/>
            <person name="Ferry-Dumazet H."/>
            <person name="Groppi A."/>
            <person name="Hantraye F."/>
            <person name="Hennequin C."/>
            <person name="Jauniaux N."/>
            <person name="Joyet P."/>
            <person name="Kachouri R."/>
            <person name="Kerrest A."/>
            <person name="Koszul R."/>
            <person name="Lemaire M."/>
            <person name="Lesur I."/>
            <person name="Ma L."/>
            <person name="Muller H."/>
            <person name="Nicaud J.-M."/>
            <person name="Nikolski M."/>
            <person name="Oztas S."/>
            <person name="Ozier-Kalogeropoulos O."/>
            <person name="Pellenz S."/>
            <person name="Potier S."/>
            <person name="Richard G.-F."/>
            <person name="Straub M.-L."/>
            <person name="Suleau A."/>
            <person name="Swennen D."/>
            <person name="Tekaia F."/>
            <person name="Wesolowski-Louvel M."/>
            <person name="Westhof E."/>
            <person name="Wirth B."/>
            <person name="Zeniou-Meyer M."/>
            <person name="Zivanovic Y."/>
            <person name="Bolotin-Fukuhara M."/>
            <person name="Thierry A."/>
            <person name="Bouchier C."/>
            <person name="Caudron B."/>
            <person name="Scarpelli C."/>
            <person name="Gaillardin C."/>
            <person name="Weissenbach J."/>
            <person name="Wincker P."/>
            <person name="Souciet J.-L."/>
        </authorList>
    </citation>
    <scope>NUCLEOTIDE SEQUENCE [LARGE SCALE GENOMIC DNA]</scope>
    <source>
        <strain>ATCC 36239 / CBS 767 / BCRC 21394 / JCM 1990 / NBRC 0083 / IGC 2968</strain>
    </source>
</reference>
<organism>
    <name type="scientific">Debaryomyces hansenii (strain ATCC 36239 / CBS 767 / BCRC 21394 / JCM 1990 / NBRC 0083 / IGC 2968)</name>
    <name type="common">Yeast</name>
    <name type="synonym">Torulaspora hansenii</name>
    <dbReference type="NCBI Taxonomy" id="284592"/>
    <lineage>
        <taxon>Eukaryota</taxon>
        <taxon>Fungi</taxon>
        <taxon>Dikarya</taxon>
        <taxon>Ascomycota</taxon>
        <taxon>Saccharomycotina</taxon>
        <taxon>Pichiomycetes</taxon>
        <taxon>Debaryomycetaceae</taxon>
        <taxon>Debaryomyces</taxon>
    </lineage>
</organism>
<comment type="function">
    <text evidence="1">Component of the post-replicative DNA mismatch repair system (MMR). Heterodimerizes with MSH2 to form MutS beta, which binds to DNA mismatches thereby initiating DNA repair. MSH3 provides substrate-binding and substrate specificity to the complex. When bound, the MutS beta heterodimer bends the DNA helix and shields approximately 20 base pairs. Acts mainly to repair insertion-deletion loops (IDLs) from 2 to 13 nucleotides in size, but can also repair base-base and single insertion-deletion mismatches that occur during replication. After mismatch binding, forms a ternary complex with the MutL alpha heterodimer, which is thought to be responsible for directing the downstream MMR events, including strand discrimination, excision, and resynthesis. ATP binding and hydrolysis play a pivotal role in mismatch repair functions (By similarity).</text>
</comment>
<comment type="subunit">
    <text evidence="1">Heterodimer consisting of MSH2-MSH3 (MutS beta). Forms a ternary complex with MutL alpha (MLH1-PMS1) (By similarity).</text>
</comment>
<comment type="subcellular location">
    <subcellularLocation>
        <location evidence="1">Nucleus</location>
    </subcellularLocation>
</comment>
<comment type="similarity">
    <text evidence="4">Belongs to the DNA mismatch repair MutS family. MSH3 subfamily.</text>
</comment>
<proteinExistence type="inferred from homology"/>
<protein>
    <recommendedName>
        <fullName>DNA mismatch repair protein MSH3</fullName>
    </recommendedName>
    <alternativeName>
        <fullName>MutS protein homolog 3</fullName>
    </alternativeName>
</protein>
<gene>
    <name type="primary">MSH3</name>
    <name type="ordered locus">DEHA2B13574g</name>
</gene>
<dbReference type="EMBL" id="CR382134">
    <property type="protein sequence ID" value="CAR65491.1"/>
    <property type="molecule type" value="Genomic_DNA"/>
</dbReference>
<dbReference type="RefSeq" id="XP_002770122.1">
    <property type="nucleotide sequence ID" value="XM_002770076.1"/>
</dbReference>
<dbReference type="SMR" id="Q6BW83"/>
<dbReference type="FunCoup" id="Q6BW83">
    <property type="interactions" value="841"/>
</dbReference>
<dbReference type="STRING" id="284592.Q6BW83"/>
<dbReference type="GeneID" id="8998252"/>
<dbReference type="KEGG" id="dha:DEHA2B13574g"/>
<dbReference type="VEuPathDB" id="FungiDB:DEHA2B13574g"/>
<dbReference type="eggNOG" id="KOG0218">
    <property type="taxonomic scope" value="Eukaryota"/>
</dbReference>
<dbReference type="HOGENOM" id="CLU_002472_0_0_1"/>
<dbReference type="InParanoid" id="Q6BW83"/>
<dbReference type="OMA" id="INMHAAR"/>
<dbReference type="OrthoDB" id="121051at2759"/>
<dbReference type="Proteomes" id="UP000000599">
    <property type="component" value="Chromosome B"/>
</dbReference>
<dbReference type="GO" id="GO:0032302">
    <property type="term" value="C:MutSbeta complex"/>
    <property type="evidence" value="ECO:0007669"/>
    <property type="project" value="EnsemblFungi"/>
</dbReference>
<dbReference type="GO" id="GO:0035861">
    <property type="term" value="C:site of double-strand break"/>
    <property type="evidence" value="ECO:0007669"/>
    <property type="project" value="EnsemblFungi"/>
</dbReference>
<dbReference type="GO" id="GO:0005524">
    <property type="term" value="F:ATP binding"/>
    <property type="evidence" value="ECO:0007669"/>
    <property type="project" value="UniProtKB-KW"/>
</dbReference>
<dbReference type="GO" id="GO:0140664">
    <property type="term" value="F:ATP-dependent DNA damage sensor activity"/>
    <property type="evidence" value="ECO:0007669"/>
    <property type="project" value="InterPro"/>
</dbReference>
<dbReference type="GO" id="GO:0000406">
    <property type="term" value="F:double-strand/single-strand DNA junction binding"/>
    <property type="evidence" value="ECO:0007669"/>
    <property type="project" value="EnsemblFungi"/>
</dbReference>
<dbReference type="GO" id="GO:0000404">
    <property type="term" value="F:heteroduplex DNA loop binding"/>
    <property type="evidence" value="ECO:0007669"/>
    <property type="project" value="EnsemblFungi"/>
</dbReference>
<dbReference type="GO" id="GO:0000403">
    <property type="term" value="F:Y-form DNA binding"/>
    <property type="evidence" value="ECO:0007669"/>
    <property type="project" value="EnsemblFungi"/>
</dbReference>
<dbReference type="GO" id="GO:0007534">
    <property type="term" value="P:gene conversion at mating-type locus"/>
    <property type="evidence" value="ECO:0007669"/>
    <property type="project" value="EnsemblFungi"/>
</dbReference>
<dbReference type="GO" id="GO:0043570">
    <property type="term" value="P:maintenance of DNA repeat elements"/>
    <property type="evidence" value="ECO:0007669"/>
    <property type="project" value="EnsemblFungi"/>
</dbReference>
<dbReference type="GO" id="GO:0000710">
    <property type="term" value="P:meiotic mismatch repair"/>
    <property type="evidence" value="ECO:0007669"/>
    <property type="project" value="EnsemblFungi"/>
</dbReference>
<dbReference type="GO" id="GO:0007131">
    <property type="term" value="P:reciprocal meiotic recombination"/>
    <property type="evidence" value="ECO:0007669"/>
    <property type="project" value="EnsemblFungi"/>
</dbReference>
<dbReference type="GO" id="GO:0000735">
    <property type="term" value="P:removal of nonhomologous ends"/>
    <property type="evidence" value="ECO:0007669"/>
    <property type="project" value="EnsemblFungi"/>
</dbReference>
<dbReference type="GO" id="GO:0043111">
    <property type="term" value="P:replication fork arrest"/>
    <property type="evidence" value="ECO:0007669"/>
    <property type="project" value="EnsemblFungi"/>
</dbReference>
<dbReference type="FunFam" id="3.40.50.300:FF:000870">
    <property type="entry name" value="MutS protein homolog 4"/>
    <property type="match status" value="1"/>
</dbReference>
<dbReference type="Gene3D" id="1.10.1420.10">
    <property type="match status" value="2"/>
</dbReference>
<dbReference type="Gene3D" id="3.40.1170.10">
    <property type="entry name" value="DNA repair protein MutS, domain I"/>
    <property type="match status" value="1"/>
</dbReference>
<dbReference type="Gene3D" id="3.30.420.110">
    <property type="entry name" value="MutS, connector domain"/>
    <property type="match status" value="1"/>
</dbReference>
<dbReference type="Gene3D" id="3.40.50.300">
    <property type="entry name" value="P-loop containing nucleotide triphosphate hydrolases"/>
    <property type="match status" value="1"/>
</dbReference>
<dbReference type="InterPro" id="IPR007695">
    <property type="entry name" value="DNA_mismatch_repair_MutS-lik_N"/>
</dbReference>
<dbReference type="InterPro" id="IPR017261">
    <property type="entry name" value="DNA_mismatch_repair_MutS/MSH"/>
</dbReference>
<dbReference type="InterPro" id="IPR000432">
    <property type="entry name" value="DNA_mismatch_repair_MutS_C"/>
</dbReference>
<dbReference type="InterPro" id="IPR007861">
    <property type="entry name" value="DNA_mismatch_repair_MutS_clamp"/>
</dbReference>
<dbReference type="InterPro" id="IPR007696">
    <property type="entry name" value="DNA_mismatch_repair_MutS_core"/>
</dbReference>
<dbReference type="InterPro" id="IPR016151">
    <property type="entry name" value="DNA_mismatch_repair_MutS_N"/>
</dbReference>
<dbReference type="InterPro" id="IPR036187">
    <property type="entry name" value="DNA_mismatch_repair_MutS_sf"/>
</dbReference>
<dbReference type="InterPro" id="IPR007860">
    <property type="entry name" value="DNA_mmatch_repair_MutS_con_dom"/>
</dbReference>
<dbReference type="InterPro" id="IPR045076">
    <property type="entry name" value="MutS"/>
</dbReference>
<dbReference type="InterPro" id="IPR036678">
    <property type="entry name" value="MutS_con_dom_sf"/>
</dbReference>
<dbReference type="InterPro" id="IPR027417">
    <property type="entry name" value="P-loop_NTPase"/>
</dbReference>
<dbReference type="NCBIfam" id="NF003810">
    <property type="entry name" value="PRK05399.1"/>
    <property type="match status" value="1"/>
</dbReference>
<dbReference type="PANTHER" id="PTHR11361:SF122">
    <property type="entry name" value="DNA MISMATCH REPAIR PROTEIN MSH3"/>
    <property type="match status" value="1"/>
</dbReference>
<dbReference type="PANTHER" id="PTHR11361">
    <property type="entry name" value="DNA MISMATCH REPAIR PROTEIN MUTS FAMILY MEMBER"/>
    <property type="match status" value="1"/>
</dbReference>
<dbReference type="Pfam" id="PF01624">
    <property type="entry name" value="MutS_I"/>
    <property type="match status" value="1"/>
</dbReference>
<dbReference type="Pfam" id="PF05188">
    <property type="entry name" value="MutS_II"/>
    <property type="match status" value="1"/>
</dbReference>
<dbReference type="Pfam" id="PF05192">
    <property type="entry name" value="MutS_III"/>
    <property type="match status" value="1"/>
</dbReference>
<dbReference type="Pfam" id="PF05190">
    <property type="entry name" value="MutS_IV"/>
    <property type="match status" value="1"/>
</dbReference>
<dbReference type="Pfam" id="PF00488">
    <property type="entry name" value="MutS_V"/>
    <property type="match status" value="1"/>
</dbReference>
<dbReference type="PIRSF" id="PIRSF037677">
    <property type="entry name" value="DNA_mis_repair_Msh6"/>
    <property type="match status" value="1"/>
</dbReference>
<dbReference type="SMART" id="SM00534">
    <property type="entry name" value="MUTSac"/>
    <property type="match status" value="1"/>
</dbReference>
<dbReference type="SMART" id="SM00533">
    <property type="entry name" value="MUTSd"/>
    <property type="match status" value="1"/>
</dbReference>
<dbReference type="SUPFAM" id="SSF55271">
    <property type="entry name" value="DNA repair protein MutS, domain I"/>
    <property type="match status" value="1"/>
</dbReference>
<dbReference type="SUPFAM" id="SSF48334">
    <property type="entry name" value="DNA repair protein MutS, domain III"/>
    <property type="match status" value="1"/>
</dbReference>
<dbReference type="SUPFAM" id="SSF52540">
    <property type="entry name" value="P-loop containing nucleoside triphosphate hydrolases"/>
    <property type="match status" value="1"/>
</dbReference>
<dbReference type="PROSITE" id="PS00486">
    <property type="entry name" value="DNA_MISMATCH_REPAIR_2"/>
    <property type="match status" value="1"/>
</dbReference>
<sequence length="1028" mass="117540">MAPETKGQRSISHFFKSQSSSQKLNKDDTEYSGNIIDLTNGDEKVSSRLANFEHKPNKSSKSPNELDTSKRKSSKDNEHVDGDPEPVKKKPRTSQSLSRSKSKPQSVGSNSKKLTPLEKQFVEMKQSNLDKILAIQVGYKFKFFGEDAVIASKILSIMLIPGNIKLDEYQHDRFAYCSIPDNRLHIHLKRLLNQGLKVGVAKQTETAAIKSIDSTNKSGLFEREITGVYTKATYMGDELLTGDPNINRTSITDDEMGDYIFCIDESHSKDIGMIAIQPITGDIIYDTFNDNVTRDELETRLVYLNPSEILVINNSTEISKETIKMINIVNNKVNIIHRPRRQQTDYTNEIYNFFNTIDEGKYKDLGEHYLLKFPNNIQSCMIELIKYLEEFKLSNIFTIISNVSCFSNSKTCLVLPSSTVQALEIFQNMTDPNSNKGSLIWLLNHTRTRMGNRLLVKWISKPLIDKAQIEERLQGIEDLTFKFNHFIDSLKNQLDKIGKASIDLEKNLIKVHYSSTYQLDKISRKEVYLLLKCFDDILSMIKQFGKPTNNILESIHSPLLLRIFDELMQLAKEDTVRCLLDMISADALDDSNLNDQKIKFFNLNYFKDQQIISQLSEISNVESLLNDELIEIRKMLKRPQLNYITSSKETYLVEVRNGKMVDSLPKDWIKINGTKTVSRFRSPEITRLHKQLQYHNDMLIRNCDKAFNAYLFKIDNNYEFFSKIIRNLSTFDCLLSLSAVSSINSNYARPKIVEDKQIIQMKNSRNPIIENLSVNYSNYISNDINISYDEDRVLIITGPNMGGKSTYVKQVALLVIMAQIGSYIPCDEATVGIFDSIFIRMGARDNILQNQSTFMIEMLECSHILKNMTSNSLIILDEIGRGTGTNDGIAIAYSILNYLIEEPRKPLTLFITHFPSLHVLEDKFKGIATNYHMGFHEVSKSNQEFPEVVFLYNLVRGVVGNSYGLNVAKLAGIPNSIINNAYTKSTEIRDAIESDWPKKLIKMIKSLREQNDARVELLEIEQLCNNID</sequence>
<keyword id="KW-0067">ATP-binding</keyword>
<keyword id="KW-0227">DNA damage</keyword>
<keyword id="KW-0234">DNA repair</keyword>
<keyword id="KW-0238">DNA-binding</keyword>
<keyword id="KW-0547">Nucleotide-binding</keyword>
<keyword id="KW-0539">Nucleus</keyword>
<keyword id="KW-1185">Reference proteome</keyword>
<feature type="chain" id="PRO_0000338520" description="DNA mismatch repair protein MSH3">
    <location>
        <begin position="1"/>
        <end position="1028"/>
    </location>
</feature>
<feature type="region of interest" description="Disordered" evidence="3">
    <location>
        <begin position="1"/>
        <end position="114"/>
    </location>
</feature>
<feature type="region of interest" description="Mispair-binding domain" evidence="1">
    <location>
        <begin position="109"/>
        <end position="232"/>
    </location>
</feature>
<feature type="compositionally biased region" description="Low complexity" evidence="3">
    <location>
        <begin position="10"/>
        <end position="23"/>
    </location>
</feature>
<feature type="compositionally biased region" description="Basic and acidic residues" evidence="3">
    <location>
        <begin position="41"/>
        <end position="56"/>
    </location>
</feature>
<feature type="compositionally biased region" description="Basic and acidic residues" evidence="3">
    <location>
        <begin position="67"/>
        <end position="88"/>
    </location>
</feature>
<feature type="compositionally biased region" description="Polar residues" evidence="3">
    <location>
        <begin position="93"/>
        <end position="113"/>
    </location>
</feature>
<feature type="binding site" evidence="2">
    <location>
        <begin position="798"/>
        <end position="805"/>
    </location>
    <ligand>
        <name>ATP</name>
        <dbReference type="ChEBI" id="CHEBI:30616"/>
    </ligand>
</feature>